<organism>
    <name type="scientific">Homo sapiens</name>
    <name type="common">Human</name>
    <dbReference type="NCBI Taxonomy" id="9606"/>
    <lineage>
        <taxon>Eukaryota</taxon>
        <taxon>Metazoa</taxon>
        <taxon>Chordata</taxon>
        <taxon>Craniata</taxon>
        <taxon>Vertebrata</taxon>
        <taxon>Euteleostomi</taxon>
        <taxon>Mammalia</taxon>
        <taxon>Eutheria</taxon>
        <taxon>Euarchontoglires</taxon>
        <taxon>Primates</taxon>
        <taxon>Haplorrhini</taxon>
        <taxon>Catarrhini</taxon>
        <taxon>Hominidae</taxon>
        <taxon>Homo</taxon>
    </lineage>
</organism>
<sequence length="523" mass="57626">MTNPQPAIEGGISEVEIISQQVDEETKSIAPVQLVNFAYRDLPLAAVDLSTAGSQLLSNLDEDYQREGSNWLKPCCGKRAAVWQVFLLSASLNSFLVACVILVVILLTLELLIDIKLLQFSSAFQFAGVIHWISLVILSVFFSETVLRIVVLGIWDYIENKIEVFDGAVIILSLAPMVASTVANGPRSPWDAISLIIMLRIWRVKRVIDAYVLPVKLEMEMVIQQYEKAKVIQDEQLERLTQICQEQGFEIRQLRAHLAQQDLDLAAEREAALQAPHVLSQPRSRFKVLEAGTWDEETAAESVVEELQPSQEATMKDDMNSYISQYYNGPSSDSGVPEPAVCMVTTAAIDIHQPNISSDLFSLDMPLKLGGNGTSATSESASRSSVTRAQSDSSQTLGSSMDCSTAREEPSSEPGPSPPPLPSQQQVEEATVQDLLSSLSEDPCPSQKALDPAPLARPSPAGSAQTSPELEHRVSLFNQKNQEGFTVFQIRPVIHFQPTVPMLEDKFRSLESKEQKLHRVPEA</sequence>
<evidence type="ECO:0000250" key="1">
    <source>
        <dbReference type="UniProtKB" id="Q8BZB3"/>
    </source>
</evidence>
<evidence type="ECO:0000255" key="2"/>
<evidence type="ECO:0000256" key="3">
    <source>
        <dbReference type="SAM" id="MobiDB-lite"/>
    </source>
</evidence>
<evidence type="ECO:0000269" key="4">
    <source>
    </source>
</evidence>
<evidence type="ECO:0000269" key="5">
    <source>
    </source>
</evidence>
<evidence type="ECO:0000269" key="6">
    <source>
    </source>
</evidence>
<evidence type="ECO:0000269" key="7">
    <source>
    </source>
</evidence>
<evidence type="ECO:0000303" key="8">
    <source>
    </source>
</evidence>
<evidence type="ECO:0000303" key="9">
    <source>
    </source>
</evidence>
<evidence type="ECO:0000305" key="10"/>
<evidence type="ECO:0000312" key="11">
    <source>
        <dbReference type="HGNC" id="HGNC:26763"/>
    </source>
</evidence>
<protein>
    <recommendedName>
        <fullName evidence="10">Transmembrane protein 266</fullName>
        <shortName evidence="9">hTMEM266</shortName>
    </recommendedName>
    <alternativeName>
        <fullName evidence="8">HV1-related protein 1</fullName>
        <shortName evidence="8">HsHVRP1</shortName>
    </alternativeName>
</protein>
<proteinExistence type="evidence at protein level"/>
<keyword id="KW-1003">Cell membrane</keyword>
<keyword id="KW-0966">Cell projection</keyword>
<keyword id="KW-0175">Coiled coil</keyword>
<keyword id="KW-1015">Disulfide bond</keyword>
<keyword id="KW-0472">Membrane</keyword>
<keyword id="KW-1267">Proteomics identification</keyword>
<keyword id="KW-1185">Reference proteome</keyword>
<keyword id="KW-0812">Transmembrane</keyword>
<keyword id="KW-1133">Transmembrane helix</keyword>
<gene>
    <name evidence="11" type="primary">TMEM266</name>
    <name evidence="11" type="synonym">C15orf27</name>
    <name evidence="8" type="synonym">HVRP1</name>
</gene>
<reference key="1">
    <citation type="journal article" date="2006" name="Nature">
        <title>Analysis of the DNA sequence and duplication history of human chromosome 15.</title>
        <authorList>
            <person name="Zody M.C."/>
            <person name="Garber M."/>
            <person name="Sharpe T."/>
            <person name="Young S.K."/>
            <person name="Rowen L."/>
            <person name="O'Neill K."/>
            <person name="Whittaker C.A."/>
            <person name="Kamal M."/>
            <person name="Chang J.L."/>
            <person name="Cuomo C.A."/>
            <person name="Dewar K."/>
            <person name="FitzGerald M.G."/>
            <person name="Kodira C.D."/>
            <person name="Madan A."/>
            <person name="Qin S."/>
            <person name="Yang X."/>
            <person name="Abbasi N."/>
            <person name="Abouelleil A."/>
            <person name="Arachchi H.M."/>
            <person name="Baradarani L."/>
            <person name="Birditt B."/>
            <person name="Bloom S."/>
            <person name="Bloom T."/>
            <person name="Borowsky M.L."/>
            <person name="Burke J."/>
            <person name="Butler J."/>
            <person name="Cook A."/>
            <person name="DeArellano K."/>
            <person name="DeCaprio D."/>
            <person name="Dorris L. III"/>
            <person name="Dors M."/>
            <person name="Eichler E.E."/>
            <person name="Engels R."/>
            <person name="Fahey J."/>
            <person name="Fleetwood P."/>
            <person name="Friedman C."/>
            <person name="Gearin G."/>
            <person name="Hall J.L."/>
            <person name="Hensley G."/>
            <person name="Johnson E."/>
            <person name="Jones C."/>
            <person name="Kamat A."/>
            <person name="Kaur A."/>
            <person name="Locke D.P."/>
            <person name="Madan A."/>
            <person name="Munson G."/>
            <person name="Jaffe D.B."/>
            <person name="Lui A."/>
            <person name="Macdonald P."/>
            <person name="Mauceli E."/>
            <person name="Naylor J.W."/>
            <person name="Nesbitt R."/>
            <person name="Nicol R."/>
            <person name="O'Leary S.B."/>
            <person name="Ratcliffe A."/>
            <person name="Rounsley S."/>
            <person name="She X."/>
            <person name="Sneddon K.M.B."/>
            <person name="Stewart S."/>
            <person name="Sougnez C."/>
            <person name="Stone S.M."/>
            <person name="Topham K."/>
            <person name="Vincent D."/>
            <person name="Wang S."/>
            <person name="Zimmer A.R."/>
            <person name="Birren B.W."/>
            <person name="Hood L."/>
            <person name="Lander E.S."/>
            <person name="Nusbaum C."/>
        </authorList>
    </citation>
    <scope>NUCLEOTIDE SEQUENCE [LARGE SCALE GENOMIC DNA]</scope>
</reference>
<reference key="2">
    <citation type="journal article" date="2004" name="Nat. Genet.">
        <title>Complete sequencing and characterization of 21,243 full-length human cDNAs.</title>
        <authorList>
            <person name="Ota T."/>
            <person name="Suzuki Y."/>
            <person name="Nishikawa T."/>
            <person name="Otsuki T."/>
            <person name="Sugiyama T."/>
            <person name="Irie R."/>
            <person name="Wakamatsu A."/>
            <person name="Hayashi K."/>
            <person name="Sato H."/>
            <person name="Nagai K."/>
            <person name="Kimura K."/>
            <person name="Makita H."/>
            <person name="Sekine M."/>
            <person name="Obayashi M."/>
            <person name="Nishi T."/>
            <person name="Shibahara T."/>
            <person name="Tanaka T."/>
            <person name="Ishii S."/>
            <person name="Yamamoto J."/>
            <person name="Saito K."/>
            <person name="Kawai Y."/>
            <person name="Isono Y."/>
            <person name="Nakamura Y."/>
            <person name="Nagahari K."/>
            <person name="Murakami K."/>
            <person name="Yasuda T."/>
            <person name="Iwayanagi T."/>
            <person name="Wagatsuma M."/>
            <person name="Shiratori A."/>
            <person name="Sudo H."/>
            <person name="Hosoiri T."/>
            <person name="Kaku Y."/>
            <person name="Kodaira H."/>
            <person name="Kondo H."/>
            <person name="Sugawara M."/>
            <person name="Takahashi M."/>
            <person name="Kanda K."/>
            <person name="Yokoi T."/>
            <person name="Furuya T."/>
            <person name="Kikkawa E."/>
            <person name="Omura Y."/>
            <person name="Abe K."/>
            <person name="Kamihara K."/>
            <person name="Katsuta N."/>
            <person name="Sato K."/>
            <person name="Tanikawa M."/>
            <person name="Yamazaki M."/>
            <person name="Ninomiya K."/>
            <person name="Ishibashi T."/>
            <person name="Yamashita H."/>
            <person name="Murakawa K."/>
            <person name="Fujimori K."/>
            <person name="Tanai H."/>
            <person name="Kimata M."/>
            <person name="Watanabe M."/>
            <person name="Hiraoka S."/>
            <person name="Chiba Y."/>
            <person name="Ishida S."/>
            <person name="Ono Y."/>
            <person name="Takiguchi S."/>
            <person name="Watanabe S."/>
            <person name="Yosida M."/>
            <person name="Hotuta T."/>
            <person name="Kusano J."/>
            <person name="Kanehori K."/>
            <person name="Takahashi-Fujii A."/>
            <person name="Hara H."/>
            <person name="Tanase T.-O."/>
            <person name="Nomura Y."/>
            <person name="Togiya S."/>
            <person name="Komai F."/>
            <person name="Hara R."/>
            <person name="Takeuchi K."/>
            <person name="Arita M."/>
            <person name="Imose N."/>
            <person name="Musashino K."/>
            <person name="Yuuki H."/>
            <person name="Oshima A."/>
            <person name="Sasaki N."/>
            <person name="Aotsuka S."/>
            <person name="Yoshikawa Y."/>
            <person name="Matsunawa H."/>
            <person name="Ichihara T."/>
            <person name="Shiohata N."/>
            <person name="Sano S."/>
            <person name="Moriya S."/>
            <person name="Momiyama H."/>
            <person name="Satoh N."/>
            <person name="Takami S."/>
            <person name="Terashima Y."/>
            <person name="Suzuki O."/>
            <person name="Nakagawa S."/>
            <person name="Senoh A."/>
            <person name="Mizoguchi H."/>
            <person name="Goto Y."/>
            <person name="Shimizu F."/>
            <person name="Wakebe H."/>
            <person name="Hishigaki H."/>
            <person name="Watanabe T."/>
            <person name="Sugiyama A."/>
            <person name="Takemoto M."/>
            <person name="Kawakami B."/>
            <person name="Yamazaki M."/>
            <person name="Watanabe K."/>
            <person name="Kumagai A."/>
            <person name="Itakura S."/>
            <person name="Fukuzumi Y."/>
            <person name="Fujimori Y."/>
            <person name="Komiyama M."/>
            <person name="Tashiro H."/>
            <person name="Tanigami A."/>
            <person name="Fujiwara T."/>
            <person name="Ono T."/>
            <person name="Yamada K."/>
            <person name="Fujii Y."/>
            <person name="Ozaki K."/>
            <person name="Hirao M."/>
            <person name="Ohmori Y."/>
            <person name="Kawabata A."/>
            <person name="Hikiji T."/>
            <person name="Kobatake N."/>
            <person name="Inagaki H."/>
            <person name="Ikema Y."/>
            <person name="Okamoto S."/>
            <person name="Okitani R."/>
            <person name="Kawakami T."/>
            <person name="Noguchi S."/>
            <person name="Itoh T."/>
            <person name="Shigeta K."/>
            <person name="Senba T."/>
            <person name="Matsumura K."/>
            <person name="Nakajima Y."/>
            <person name="Mizuno T."/>
            <person name="Morinaga M."/>
            <person name="Sasaki M."/>
            <person name="Togashi T."/>
            <person name="Oyama M."/>
            <person name="Hata H."/>
            <person name="Watanabe M."/>
            <person name="Komatsu T."/>
            <person name="Mizushima-Sugano J."/>
            <person name="Satoh T."/>
            <person name="Shirai Y."/>
            <person name="Takahashi Y."/>
            <person name="Nakagawa K."/>
            <person name="Okumura K."/>
            <person name="Nagase T."/>
            <person name="Nomura N."/>
            <person name="Kikuchi H."/>
            <person name="Masuho Y."/>
            <person name="Yamashita R."/>
            <person name="Nakai K."/>
            <person name="Yada T."/>
            <person name="Nakamura Y."/>
            <person name="Ohara O."/>
            <person name="Isogai T."/>
            <person name="Sugano S."/>
        </authorList>
    </citation>
    <scope>NUCLEOTIDE SEQUENCE [LARGE SCALE MRNA] OF 121-523</scope>
    <scope>VARIANTS HIS-383 AND LEU-419</scope>
    <source>
        <tissue>Fetal brain</tissue>
        <tissue>Testis</tissue>
    </source>
</reference>
<reference key="3">
    <citation type="journal article" date="2004" name="Genome Res.">
        <title>The status, quality, and expansion of the NIH full-length cDNA project: the Mammalian Gene Collection (MGC).</title>
        <authorList>
            <consortium name="The MGC Project Team"/>
        </authorList>
    </citation>
    <scope>NUCLEOTIDE SEQUENCE [LARGE SCALE MRNA] OF 166-523</scope>
</reference>
<reference key="4">
    <citation type="journal article" date="2011" name="Nature">
        <title>Aspartate 112 is the selectivity filter of the human voltage-gated proton channel.</title>
        <authorList>
            <person name="Musset B."/>
            <person name="Smith S.M."/>
            <person name="Rajan S."/>
            <person name="Morgan D."/>
            <person name="Cherny V.V."/>
            <person name="Decoursey T.E."/>
        </authorList>
    </citation>
    <scope>SUBCELLULAR LOCATION</scope>
</reference>
<reference key="5">
    <citation type="journal article" date="2014" name="PLoS ONE">
        <title>Evidence for functional diversity between the voltage-gated proton channel Hv1 and its closest related protein HVRP1.</title>
        <authorList>
            <person name="Kim I.H."/>
            <person name="Hevezi P."/>
            <person name="Varga C."/>
            <person name="Pathak M.M."/>
            <person name="Hong L."/>
            <person name="Ta D."/>
            <person name="Tran C.T."/>
            <person name="Zlotnik A."/>
            <person name="Soltesz I."/>
            <person name="Tombola F."/>
        </authorList>
    </citation>
    <scope>FUNCTION</scope>
    <scope>SUBCELLULAR LOCATION</scope>
    <scope>TISSUE SPECIFICITY</scope>
    <scope>MUTAGENESIS OF 103-VAL--THR-108; 143-SER--THR-145; GLY-167; 176-PRO-MET-177; LYS-205 AND 209-ASP--PRO-214</scope>
</reference>
<reference key="6">
    <citation type="journal article" date="2019" name="Elife">
        <title>TMEM266 is a functional voltage sensor regulated by extracellular Zn2.</title>
        <authorList>
            <person name="Papp F."/>
            <person name="Lomash S."/>
            <person name="Szilagyi O."/>
            <person name="Babikow E."/>
            <person name="Smith J."/>
            <person name="Chang T.H."/>
            <person name="Bahamonde M.I."/>
            <person name="Toombes G.E.S."/>
            <person name="Swartz K.J."/>
        </authorList>
    </citation>
    <scope>FUNCTION</scope>
    <scope>SUBUNIT</scope>
    <scope>SUBCELLULAR LOCATION</scope>
    <scope>DOMAIN</scope>
</reference>
<feature type="chain" id="PRO_0000244094" description="Transmembrane protein 266">
    <location>
        <begin position="1"/>
        <end position="523"/>
    </location>
</feature>
<feature type="topological domain" description="Cytoplasmic" evidence="9">
    <location>
        <begin position="1"/>
        <end position="94"/>
    </location>
</feature>
<feature type="transmembrane region" description="Helical; Name=Segment S1" evidence="2 9">
    <location>
        <begin position="95"/>
        <end position="115"/>
    </location>
</feature>
<feature type="topological domain" description="Extracellular" evidence="9">
    <location>
        <begin position="116"/>
        <end position="121"/>
    </location>
</feature>
<feature type="transmembrane region" description="Helical; Name=Segment S2" evidence="2 9">
    <location>
        <begin position="122"/>
        <end position="142"/>
    </location>
</feature>
<feature type="topological domain" description="Cytoplasmic" evidence="9">
    <location>
        <begin position="143"/>
        <end position="161"/>
    </location>
</feature>
<feature type="transmembrane region" description="Helical; Name=Segment S3" evidence="2 9">
    <location>
        <begin position="162"/>
        <end position="182"/>
    </location>
</feature>
<feature type="topological domain" description="Extracellular" evidence="9">
    <location>
        <begin position="183"/>
        <end position="191"/>
    </location>
</feature>
<feature type="transmembrane region" description="Helical; Name=Segment S4" evidence="9">
    <location>
        <begin position="192"/>
        <end position="212"/>
    </location>
</feature>
<feature type="topological domain" description="Cytoplasmic" evidence="9">
    <location>
        <begin position="213"/>
        <end position="523"/>
    </location>
</feature>
<feature type="region of interest" description="Disordered" evidence="3">
    <location>
        <begin position="380"/>
        <end position="477"/>
    </location>
</feature>
<feature type="coiled-coil region" evidence="2">
    <location>
        <begin position="218"/>
        <end position="270"/>
    </location>
</feature>
<feature type="compositionally biased region" description="Low complexity" evidence="3">
    <location>
        <begin position="382"/>
        <end position="397"/>
    </location>
</feature>
<feature type="compositionally biased region" description="Polar residues" evidence="3">
    <location>
        <begin position="398"/>
        <end position="411"/>
    </location>
</feature>
<feature type="compositionally biased region" description="Pro residues" evidence="3">
    <location>
        <begin position="421"/>
        <end position="430"/>
    </location>
</feature>
<feature type="sequence variant" id="VAR_026880" description="In dbSNP:rs937732." evidence="4">
    <original>R</original>
    <variation>H</variation>
    <location>
        <position position="383"/>
    </location>
</feature>
<feature type="sequence variant" id="VAR_026881" description="In dbSNP:rs937733." evidence="4">
    <original>P</original>
    <variation>L</variation>
    <location>
        <position position="419"/>
    </location>
</feature>
<feature type="mutagenesis site" description="Despite residues related to HVCN1 channel, does not show ion channel activity; when associated with 151-M--I-145, A-167, L-176-D-177, A-205 and 217-N--S-214." evidence="6">
    <original>VVILLT</original>
    <variation>DVILVL</variation>
    <location>
        <begin position="103"/>
        <end position="108"/>
    </location>
</feature>
<feature type="mutagenesis site" description="Despite residues related to HVCN1 channel, does not show ion channel activity; when associated with 111-D--L-108, A-167, L-176-D-177, A-205 and 217-N--S-214." evidence="6">
    <original>SET</original>
    <variation>MEI</variation>
    <location>
        <begin position="143"/>
        <end position="145"/>
    </location>
</feature>
<feature type="mutagenesis site" description="Despite residues related to HVCN1 channel, does not show ion channel activity; when associated with 111-D--L-108, 151-M--I-145, L-176-D-177, A-205 and 217-N--S-214." evidence="6">
    <original>G</original>
    <variation>A</variation>
    <location>
        <position position="167"/>
    </location>
</feature>
<feature type="mutagenesis site" description="Despite residues related to HVCN1 channel, does not show ion channel activity; when associated with 111-D--L-108, 151-M--I-145, A-167, A-205 and 217-N--S-214." evidence="6">
    <original>PM</original>
    <variation>LD</variation>
    <location>
        <begin position="176"/>
        <end position="177"/>
    </location>
</feature>
<feature type="mutagenesis site" description="Despite residues related to HVCN1 channel, does not show ion channel activity; when associated with 111-D--L-108, 151-M--I-145, A-167, L-176-D-177 and 217-N--S-214." evidence="6">
    <original>K</original>
    <variation>A</variation>
    <location>
        <position position="205"/>
    </location>
</feature>
<feature type="mutagenesis site" description="Despite residues related to HVCN1 channel, does not show ion channel activity; when associated with 111-D--L-108, 151-M--I-145, A-167, L-176-D-177 and A-205." evidence="6">
    <original>DAYVLP</original>
    <variation>NGYVLS</variation>
    <location>
        <begin position="209"/>
        <end position="214"/>
    </location>
</feature>
<name>TM266_HUMAN</name>
<accession>Q2M3C6</accession>
<accession>Q8N993</accession>
<accession>Q96LL5</accession>
<dbReference type="EMBL" id="AC091100">
    <property type="status" value="NOT_ANNOTATED_CDS"/>
    <property type="molecule type" value="Genomic_DNA"/>
</dbReference>
<dbReference type="EMBL" id="AK058126">
    <property type="protein sequence ID" value="BAB71676.1"/>
    <property type="status" value="ALT_INIT"/>
    <property type="molecule type" value="mRNA"/>
</dbReference>
<dbReference type="EMBL" id="AK095509">
    <property type="protein sequence ID" value="BAC04562.1"/>
    <property type="status" value="ALT_SEQ"/>
    <property type="molecule type" value="mRNA"/>
</dbReference>
<dbReference type="EMBL" id="BC104953">
    <property type="protein sequence ID" value="AAI04954.1"/>
    <property type="status" value="ALT_INIT"/>
    <property type="molecule type" value="mRNA"/>
</dbReference>
<dbReference type="EMBL" id="BC104955">
    <property type="protein sequence ID" value="AAI04956.1"/>
    <property type="status" value="ALT_INIT"/>
    <property type="molecule type" value="mRNA"/>
</dbReference>
<dbReference type="RefSeq" id="XP_005254217.1">
    <property type="nucleotide sequence ID" value="XM_005254160.2"/>
</dbReference>
<dbReference type="RefSeq" id="XP_016877405.1">
    <property type="nucleotide sequence ID" value="XM_017021916.1"/>
</dbReference>
<dbReference type="RefSeq" id="XP_016877406.1">
    <property type="nucleotide sequence ID" value="XM_017021917.1"/>
</dbReference>
<dbReference type="BioGRID" id="125826">
    <property type="interactions" value="15"/>
</dbReference>
<dbReference type="FunCoup" id="Q2M3C6">
    <property type="interactions" value="241"/>
</dbReference>
<dbReference type="IntAct" id="Q2M3C6">
    <property type="interactions" value="14"/>
</dbReference>
<dbReference type="STRING" id="9606.ENSP00000373594"/>
<dbReference type="iPTMnet" id="Q2M3C6"/>
<dbReference type="PhosphoSitePlus" id="Q2M3C6"/>
<dbReference type="SwissPalm" id="Q2M3C6"/>
<dbReference type="BioMuta" id="TMEM266"/>
<dbReference type="DMDM" id="122065157"/>
<dbReference type="jPOST" id="Q2M3C6"/>
<dbReference type="MassIVE" id="Q2M3C6"/>
<dbReference type="PaxDb" id="9606-ENSP00000373594"/>
<dbReference type="PeptideAtlas" id="Q2M3C6"/>
<dbReference type="TopDownProteomics" id="Q2M3C6"/>
<dbReference type="Antibodypedia" id="27411">
    <property type="antibodies" value="103 antibodies from 20 providers"/>
</dbReference>
<dbReference type="DNASU" id="123591"/>
<dbReference type="GeneID" id="123591"/>
<dbReference type="KEGG" id="hsa:123591"/>
<dbReference type="AGR" id="HGNC:26763"/>
<dbReference type="CTD" id="123591"/>
<dbReference type="DisGeNET" id="123591"/>
<dbReference type="GeneCards" id="TMEM266"/>
<dbReference type="HGNC" id="HGNC:26763">
    <property type="gene designation" value="TMEM266"/>
</dbReference>
<dbReference type="HPA" id="ENSG00000169758">
    <property type="expression patterns" value="Group enriched (brain, skeletal muscle)"/>
</dbReference>
<dbReference type="MIM" id="618691">
    <property type="type" value="gene"/>
</dbReference>
<dbReference type="neXtProt" id="NX_Q2M3C6"/>
<dbReference type="OpenTargets" id="ENSG00000169758"/>
<dbReference type="PharmGKB" id="PA134968419"/>
<dbReference type="VEuPathDB" id="HostDB:ENSG00000169758"/>
<dbReference type="eggNOG" id="ENOG502QRI0">
    <property type="taxonomic scope" value="Eukaryota"/>
</dbReference>
<dbReference type="GeneTree" id="ENSGT00940000156738"/>
<dbReference type="HOGENOM" id="CLU_039406_0_0_1"/>
<dbReference type="InParanoid" id="Q2M3C6"/>
<dbReference type="OMA" id="FQFATII"/>
<dbReference type="OrthoDB" id="427456at2759"/>
<dbReference type="PAN-GO" id="Q2M3C6">
    <property type="GO annotations" value="2 GO annotations based on evolutionary models"/>
</dbReference>
<dbReference type="PhylomeDB" id="Q2M3C6"/>
<dbReference type="TreeFam" id="TF332271"/>
<dbReference type="PathwayCommons" id="Q2M3C6"/>
<dbReference type="SignaLink" id="Q2M3C6"/>
<dbReference type="BioGRID-ORCS" id="123591">
    <property type="hits" value="9 hits in 1125 CRISPR screens"/>
</dbReference>
<dbReference type="ChiTaRS" id="TMEM266">
    <property type="organism name" value="human"/>
</dbReference>
<dbReference type="GenomeRNAi" id="123591"/>
<dbReference type="Pharos" id="Q2M3C6">
    <property type="development level" value="Tdark"/>
</dbReference>
<dbReference type="PRO" id="PR:Q2M3C6"/>
<dbReference type="Proteomes" id="UP000005640">
    <property type="component" value="Chromosome 15"/>
</dbReference>
<dbReference type="RNAct" id="Q2M3C6">
    <property type="molecule type" value="protein"/>
</dbReference>
<dbReference type="Bgee" id="ENSG00000169758">
    <property type="expression patterns" value="Expressed in right hemisphere of cerebellum and 112 other cell types or tissues"/>
</dbReference>
<dbReference type="ExpressionAtlas" id="Q2M3C6">
    <property type="expression patterns" value="baseline and differential"/>
</dbReference>
<dbReference type="GO" id="GO:0005829">
    <property type="term" value="C:cytosol"/>
    <property type="evidence" value="ECO:0000314"/>
    <property type="project" value="HPA"/>
</dbReference>
<dbReference type="GO" id="GO:0030425">
    <property type="term" value="C:dendrite"/>
    <property type="evidence" value="ECO:0000314"/>
    <property type="project" value="UniProtKB"/>
</dbReference>
<dbReference type="GO" id="GO:0043204">
    <property type="term" value="C:perikaryon"/>
    <property type="evidence" value="ECO:0007669"/>
    <property type="project" value="UniProtKB-SubCell"/>
</dbReference>
<dbReference type="GO" id="GO:0005886">
    <property type="term" value="C:plasma membrane"/>
    <property type="evidence" value="ECO:0000314"/>
    <property type="project" value="HPA"/>
</dbReference>
<dbReference type="GO" id="GO:0042803">
    <property type="term" value="F:protein homodimerization activity"/>
    <property type="evidence" value="ECO:0000314"/>
    <property type="project" value="UniProtKB"/>
</dbReference>
<dbReference type="FunFam" id="1.20.120.350:FF:000041">
    <property type="entry name" value="Transmembrane protein 266"/>
    <property type="match status" value="1"/>
</dbReference>
<dbReference type="Gene3D" id="1.20.120.350">
    <property type="entry name" value="Voltage-gated potassium channels. Chain C"/>
    <property type="match status" value="1"/>
</dbReference>
<dbReference type="InterPro" id="IPR042857">
    <property type="entry name" value="TMEM266"/>
</dbReference>
<dbReference type="InterPro" id="IPR027359">
    <property type="entry name" value="Volt_channel_dom_sf"/>
</dbReference>
<dbReference type="PANTHER" id="PTHR46842">
    <property type="entry name" value="TRANSMEMBRANE PROTEIN 266"/>
    <property type="match status" value="1"/>
</dbReference>
<dbReference type="PANTHER" id="PTHR46842:SF1">
    <property type="entry name" value="TRANSMEMBRANE PROTEIN 266"/>
    <property type="match status" value="1"/>
</dbReference>
<dbReference type="SUPFAM" id="SSF81324">
    <property type="entry name" value="Voltage-gated potassium channels"/>
    <property type="match status" value="1"/>
</dbReference>
<comment type="function">
    <text evidence="6 7">Voltage-sensor protein present on the post-synaptic side of glutamatergic mossy fibers and granule cells in the cerebellum (PubMed:25165868, PubMed:30810529). Despite the presence of a voltage-sensor segment, does not form a functional ion channel and its precise role remains unclear (PubMed:25165868, PubMed:30810529). Undergoes both rapid and slow structural rearrangements in response to changes in voltage (PubMed:30810529). Contains a zinc-binding site that can regulate the slow conformational transition (PubMed:30810529).</text>
</comment>
<comment type="subunit">
    <text evidence="7">Homodimer; disulfide-linked.</text>
</comment>
<comment type="interaction">
    <interactant intactId="EBI-12163061">
        <id>Q2M3C6</id>
    </interactant>
    <interactant intactId="EBI-710124">
        <id>O60341</id>
        <label>KDM1A</label>
    </interactant>
    <organismsDiffer>false</organismsDiffer>
    <experiments>4</experiments>
</comment>
<comment type="interaction">
    <interactant intactId="EBI-12163061">
        <id>Q2M3C6</id>
    </interactant>
    <interactant intactId="EBI-16439278">
        <id>Q6FHY5</id>
        <label>MEOX2</label>
    </interactant>
    <organismsDiffer>false</organismsDiffer>
    <experiments>3</experiments>
</comment>
<comment type="subcellular location">
    <subcellularLocation>
        <location evidence="5 6">Cell membrane</location>
        <topology evidence="2">Multi-pass membrane protein</topology>
    </subcellularLocation>
    <subcellularLocation>
        <location evidence="6">Cell projection</location>
        <location evidence="6">Dendrite</location>
    </subcellularLocation>
    <subcellularLocation>
        <location evidence="6">Perikaryon</location>
    </subcellularLocation>
    <text evidence="6">Present in the dendrites and soma of cerebellar granule neurons, but not in their axon.</text>
</comment>
<comment type="tissue specificity">
    <text evidence="6">Mainly expressed in the cerebellum (PubMed:25165868). Also expressed in cerebral cortex, skeletal muscle and thyroid, but at much lower levels (PubMed:25165868).</text>
</comment>
<comment type="domain">
    <text evidence="7">The transmembrane segment S4 functions as a voltage-sensor and is characterized by a series of positively charged amino acids at every third position (PubMed:30810529). Transplantation of the transmembrane segment S4 into HVCN1, generates a functional voltage-activated proton channel (PubMed:30810529).</text>
</comment>
<comment type="domain">
    <text evidence="1">The coiled coil mediates homodimerization.</text>
</comment>
<comment type="sequence caution" evidence="10">
    <conflict type="erroneous initiation">
        <sequence resource="EMBL-CDS" id="AAI04954"/>
    </conflict>
    <text>Truncated N-terminus.</text>
</comment>
<comment type="sequence caution" evidence="10">
    <conflict type="erroneous initiation">
        <sequence resource="EMBL-CDS" id="AAI04956"/>
    </conflict>
    <text>Truncated N-terminus.</text>
</comment>
<comment type="sequence caution" evidence="10">
    <conflict type="erroneous initiation">
        <sequence resource="EMBL-CDS" id="BAB71676"/>
    </conflict>
    <text>Truncated N-terminus.</text>
</comment>
<comment type="sequence caution" evidence="10">
    <conflict type="miscellaneous discrepancy">
        <sequence resource="EMBL-CDS" id="BAC04562"/>
    </conflict>
    <text>Probable cloning artifact.</text>
</comment>